<accession>A1B5P9</accession>
<dbReference type="EC" id="2.7.7.8" evidence="1"/>
<dbReference type="EMBL" id="CP000489">
    <property type="protein sequence ID" value="ABL70843.1"/>
    <property type="status" value="ALT_INIT"/>
    <property type="molecule type" value="Genomic_DNA"/>
</dbReference>
<dbReference type="RefSeq" id="WP_041529996.1">
    <property type="nucleotide sequence ID" value="NC_008686.1"/>
</dbReference>
<dbReference type="SMR" id="A1B5P9"/>
<dbReference type="STRING" id="318586.Pden_2759"/>
<dbReference type="EnsemblBacteria" id="ABL70843">
    <property type="protein sequence ID" value="ABL70843"/>
    <property type="gene ID" value="Pden_2759"/>
</dbReference>
<dbReference type="GeneID" id="93451157"/>
<dbReference type="KEGG" id="pde:Pden_2759"/>
<dbReference type="eggNOG" id="COG1185">
    <property type="taxonomic scope" value="Bacteria"/>
</dbReference>
<dbReference type="HOGENOM" id="CLU_004217_2_2_5"/>
<dbReference type="OrthoDB" id="9804305at2"/>
<dbReference type="Proteomes" id="UP000000361">
    <property type="component" value="Chromosome 1"/>
</dbReference>
<dbReference type="GO" id="GO:0005829">
    <property type="term" value="C:cytosol"/>
    <property type="evidence" value="ECO:0007669"/>
    <property type="project" value="TreeGrafter"/>
</dbReference>
<dbReference type="GO" id="GO:0000175">
    <property type="term" value="F:3'-5'-RNA exonuclease activity"/>
    <property type="evidence" value="ECO:0007669"/>
    <property type="project" value="TreeGrafter"/>
</dbReference>
<dbReference type="GO" id="GO:0000287">
    <property type="term" value="F:magnesium ion binding"/>
    <property type="evidence" value="ECO:0007669"/>
    <property type="project" value="UniProtKB-UniRule"/>
</dbReference>
<dbReference type="GO" id="GO:0004654">
    <property type="term" value="F:polyribonucleotide nucleotidyltransferase activity"/>
    <property type="evidence" value="ECO:0007669"/>
    <property type="project" value="UniProtKB-UniRule"/>
</dbReference>
<dbReference type="GO" id="GO:0003723">
    <property type="term" value="F:RNA binding"/>
    <property type="evidence" value="ECO:0007669"/>
    <property type="project" value="UniProtKB-UniRule"/>
</dbReference>
<dbReference type="GO" id="GO:0006402">
    <property type="term" value="P:mRNA catabolic process"/>
    <property type="evidence" value="ECO:0007669"/>
    <property type="project" value="UniProtKB-UniRule"/>
</dbReference>
<dbReference type="GO" id="GO:0006396">
    <property type="term" value="P:RNA processing"/>
    <property type="evidence" value="ECO:0007669"/>
    <property type="project" value="InterPro"/>
</dbReference>
<dbReference type="CDD" id="cd02393">
    <property type="entry name" value="KH-I_PNPase"/>
    <property type="match status" value="1"/>
</dbReference>
<dbReference type="CDD" id="cd11363">
    <property type="entry name" value="RNase_PH_PNPase_1"/>
    <property type="match status" value="1"/>
</dbReference>
<dbReference type="CDD" id="cd11364">
    <property type="entry name" value="RNase_PH_PNPase_2"/>
    <property type="match status" value="1"/>
</dbReference>
<dbReference type="CDD" id="cd04472">
    <property type="entry name" value="S1_PNPase"/>
    <property type="match status" value="1"/>
</dbReference>
<dbReference type="FunFam" id="2.40.50.140:FF:000107">
    <property type="entry name" value="Polyribonucleotide nucleotidyltransferase"/>
    <property type="match status" value="1"/>
</dbReference>
<dbReference type="FunFam" id="3.30.1370.10:FF:000001">
    <property type="entry name" value="Polyribonucleotide nucleotidyltransferase"/>
    <property type="match status" value="1"/>
</dbReference>
<dbReference type="FunFam" id="3.30.230.70:FF:000001">
    <property type="entry name" value="Polyribonucleotide nucleotidyltransferase"/>
    <property type="match status" value="1"/>
</dbReference>
<dbReference type="FunFam" id="3.30.230.70:FF:000002">
    <property type="entry name" value="Polyribonucleotide nucleotidyltransferase"/>
    <property type="match status" value="1"/>
</dbReference>
<dbReference type="Gene3D" id="3.30.230.70">
    <property type="entry name" value="GHMP Kinase, N-terminal domain"/>
    <property type="match status" value="2"/>
</dbReference>
<dbReference type="Gene3D" id="3.30.1370.10">
    <property type="entry name" value="K Homology domain, type 1"/>
    <property type="match status" value="1"/>
</dbReference>
<dbReference type="Gene3D" id="2.40.50.140">
    <property type="entry name" value="Nucleic acid-binding proteins"/>
    <property type="match status" value="1"/>
</dbReference>
<dbReference type="HAMAP" id="MF_01595">
    <property type="entry name" value="PNPase"/>
    <property type="match status" value="1"/>
</dbReference>
<dbReference type="InterPro" id="IPR001247">
    <property type="entry name" value="ExoRNase_PH_dom1"/>
</dbReference>
<dbReference type="InterPro" id="IPR015847">
    <property type="entry name" value="ExoRNase_PH_dom2"/>
</dbReference>
<dbReference type="InterPro" id="IPR036345">
    <property type="entry name" value="ExoRNase_PH_dom2_sf"/>
</dbReference>
<dbReference type="InterPro" id="IPR004087">
    <property type="entry name" value="KH_dom"/>
</dbReference>
<dbReference type="InterPro" id="IPR004088">
    <property type="entry name" value="KH_dom_type_1"/>
</dbReference>
<dbReference type="InterPro" id="IPR036612">
    <property type="entry name" value="KH_dom_type_1_sf"/>
</dbReference>
<dbReference type="InterPro" id="IPR012340">
    <property type="entry name" value="NA-bd_OB-fold"/>
</dbReference>
<dbReference type="InterPro" id="IPR012162">
    <property type="entry name" value="PNPase"/>
</dbReference>
<dbReference type="InterPro" id="IPR027408">
    <property type="entry name" value="PNPase/RNase_PH_dom_sf"/>
</dbReference>
<dbReference type="InterPro" id="IPR015848">
    <property type="entry name" value="PNPase_PH_RNA-bd_bac/org-type"/>
</dbReference>
<dbReference type="InterPro" id="IPR036456">
    <property type="entry name" value="PNPase_PH_RNA-bd_sf"/>
</dbReference>
<dbReference type="InterPro" id="IPR020568">
    <property type="entry name" value="Ribosomal_Su5_D2-typ_SF"/>
</dbReference>
<dbReference type="InterPro" id="IPR003029">
    <property type="entry name" value="S1_domain"/>
</dbReference>
<dbReference type="NCBIfam" id="TIGR03591">
    <property type="entry name" value="polynuc_phos"/>
    <property type="match status" value="1"/>
</dbReference>
<dbReference type="NCBIfam" id="NF008805">
    <property type="entry name" value="PRK11824.1"/>
    <property type="match status" value="1"/>
</dbReference>
<dbReference type="PANTHER" id="PTHR11252">
    <property type="entry name" value="POLYRIBONUCLEOTIDE NUCLEOTIDYLTRANSFERASE"/>
    <property type="match status" value="1"/>
</dbReference>
<dbReference type="PANTHER" id="PTHR11252:SF0">
    <property type="entry name" value="POLYRIBONUCLEOTIDE NUCLEOTIDYLTRANSFERASE 1, MITOCHONDRIAL"/>
    <property type="match status" value="1"/>
</dbReference>
<dbReference type="Pfam" id="PF00013">
    <property type="entry name" value="KH_1"/>
    <property type="match status" value="1"/>
</dbReference>
<dbReference type="Pfam" id="PF03726">
    <property type="entry name" value="PNPase"/>
    <property type="match status" value="1"/>
</dbReference>
<dbReference type="Pfam" id="PF01138">
    <property type="entry name" value="RNase_PH"/>
    <property type="match status" value="2"/>
</dbReference>
<dbReference type="Pfam" id="PF03725">
    <property type="entry name" value="RNase_PH_C"/>
    <property type="match status" value="2"/>
</dbReference>
<dbReference type="Pfam" id="PF00575">
    <property type="entry name" value="S1"/>
    <property type="match status" value="1"/>
</dbReference>
<dbReference type="PIRSF" id="PIRSF005499">
    <property type="entry name" value="PNPase"/>
    <property type="match status" value="1"/>
</dbReference>
<dbReference type="SMART" id="SM00322">
    <property type="entry name" value="KH"/>
    <property type="match status" value="1"/>
</dbReference>
<dbReference type="SMART" id="SM00316">
    <property type="entry name" value="S1"/>
    <property type="match status" value="1"/>
</dbReference>
<dbReference type="SUPFAM" id="SSF54791">
    <property type="entry name" value="Eukaryotic type KH-domain (KH-domain type I)"/>
    <property type="match status" value="1"/>
</dbReference>
<dbReference type="SUPFAM" id="SSF50249">
    <property type="entry name" value="Nucleic acid-binding proteins"/>
    <property type="match status" value="1"/>
</dbReference>
<dbReference type="SUPFAM" id="SSF46915">
    <property type="entry name" value="Polynucleotide phosphorylase/guanosine pentaphosphate synthase (PNPase/GPSI), domain 3"/>
    <property type="match status" value="1"/>
</dbReference>
<dbReference type="SUPFAM" id="SSF55666">
    <property type="entry name" value="Ribonuclease PH domain 2-like"/>
    <property type="match status" value="2"/>
</dbReference>
<dbReference type="SUPFAM" id="SSF54211">
    <property type="entry name" value="Ribosomal protein S5 domain 2-like"/>
    <property type="match status" value="2"/>
</dbReference>
<dbReference type="PROSITE" id="PS50084">
    <property type="entry name" value="KH_TYPE_1"/>
    <property type="match status" value="1"/>
</dbReference>
<dbReference type="PROSITE" id="PS50126">
    <property type="entry name" value="S1"/>
    <property type="match status" value="1"/>
</dbReference>
<gene>
    <name evidence="1" type="primary">pnp</name>
    <name type="ordered locus">Pden_2759</name>
</gene>
<protein>
    <recommendedName>
        <fullName evidence="1">Polyribonucleotide nucleotidyltransferase</fullName>
        <ecNumber evidence="1">2.7.7.8</ecNumber>
    </recommendedName>
    <alternativeName>
        <fullName evidence="1">Polynucleotide phosphorylase</fullName>
        <shortName evidence="1">PNPase</shortName>
    </alternativeName>
</protein>
<comment type="function">
    <text evidence="1">Involved in mRNA degradation. Catalyzes the phosphorolysis of single-stranded polyribonucleotides processively in the 3'- to 5'-direction.</text>
</comment>
<comment type="catalytic activity">
    <reaction evidence="1">
        <text>RNA(n+1) + phosphate = RNA(n) + a ribonucleoside 5'-diphosphate</text>
        <dbReference type="Rhea" id="RHEA:22096"/>
        <dbReference type="Rhea" id="RHEA-COMP:14527"/>
        <dbReference type="Rhea" id="RHEA-COMP:17342"/>
        <dbReference type="ChEBI" id="CHEBI:43474"/>
        <dbReference type="ChEBI" id="CHEBI:57930"/>
        <dbReference type="ChEBI" id="CHEBI:140395"/>
        <dbReference type="EC" id="2.7.7.8"/>
    </reaction>
</comment>
<comment type="cofactor">
    <cofactor evidence="1">
        <name>Mg(2+)</name>
        <dbReference type="ChEBI" id="CHEBI:18420"/>
    </cofactor>
</comment>
<comment type="subcellular location">
    <subcellularLocation>
        <location evidence="1">Cytoplasm</location>
    </subcellularLocation>
</comment>
<comment type="similarity">
    <text evidence="1">Belongs to the polyribonucleotide nucleotidyltransferase family.</text>
</comment>
<comment type="sequence caution" evidence="2">
    <conflict type="erroneous initiation">
        <sequence resource="EMBL-CDS" id="ABL70843"/>
    </conflict>
</comment>
<proteinExistence type="inferred from homology"/>
<keyword id="KW-0963">Cytoplasm</keyword>
<keyword id="KW-0460">Magnesium</keyword>
<keyword id="KW-0479">Metal-binding</keyword>
<keyword id="KW-0548">Nucleotidyltransferase</keyword>
<keyword id="KW-1185">Reference proteome</keyword>
<keyword id="KW-0694">RNA-binding</keyword>
<keyword id="KW-0808">Transferase</keyword>
<feature type="chain" id="PRO_0000329748" description="Polyribonucleotide nucleotidyltransferase">
    <location>
        <begin position="1"/>
        <end position="715"/>
    </location>
</feature>
<feature type="domain" description="KH" evidence="1">
    <location>
        <begin position="557"/>
        <end position="616"/>
    </location>
</feature>
<feature type="domain" description="S1 motif" evidence="1">
    <location>
        <begin position="626"/>
        <end position="694"/>
    </location>
</feature>
<feature type="binding site" evidence="1">
    <location>
        <position position="490"/>
    </location>
    <ligand>
        <name>Mg(2+)</name>
        <dbReference type="ChEBI" id="CHEBI:18420"/>
    </ligand>
</feature>
<feature type="binding site" evidence="1">
    <location>
        <position position="496"/>
    </location>
    <ligand>
        <name>Mg(2+)</name>
        <dbReference type="ChEBI" id="CHEBI:18420"/>
    </ligand>
</feature>
<name>PNP_PARDP</name>
<organism>
    <name type="scientific">Paracoccus denitrificans (strain Pd 1222)</name>
    <dbReference type="NCBI Taxonomy" id="318586"/>
    <lineage>
        <taxon>Bacteria</taxon>
        <taxon>Pseudomonadati</taxon>
        <taxon>Pseudomonadota</taxon>
        <taxon>Alphaproteobacteria</taxon>
        <taxon>Rhodobacterales</taxon>
        <taxon>Paracoccaceae</taxon>
        <taxon>Paracoccus</taxon>
    </lineage>
</organism>
<reference key="1">
    <citation type="submission" date="2006-12" db="EMBL/GenBank/DDBJ databases">
        <title>Complete sequence of chromosome 1 of Paracoccus denitrificans PD1222.</title>
        <authorList>
            <person name="Copeland A."/>
            <person name="Lucas S."/>
            <person name="Lapidus A."/>
            <person name="Barry K."/>
            <person name="Detter J.C."/>
            <person name="Glavina del Rio T."/>
            <person name="Hammon N."/>
            <person name="Israni S."/>
            <person name="Dalin E."/>
            <person name="Tice H."/>
            <person name="Pitluck S."/>
            <person name="Munk A.C."/>
            <person name="Brettin T."/>
            <person name="Bruce D."/>
            <person name="Han C."/>
            <person name="Tapia R."/>
            <person name="Gilna P."/>
            <person name="Schmutz J."/>
            <person name="Larimer F."/>
            <person name="Land M."/>
            <person name="Hauser L."/>
            <person name="Kyrpides N."/>
            <person name="Lykidis A."/>
            <person name="Spiro S."/>
            <person name="Richardson D.J."/>
            <person name="Moir J.W.B."/>
            <person name="Ferguson S.J."/>
            <person name="van Spanning R.J.M."/>
            <person name="Richardson P."/>
        </authorList>
    </citation>
    <scope>NUCLEOTIDE SEQUENCE [LARGE SCALE GENOMIC DNA]</scope>
    <source>
        <strain>Pd 1222</strain>
    </source>
</reference>
<sequence>MFDEVKKSIQWGQETLTLETGKVARQADGSVIATLGETSVMANVTFAKEPKPGQDFFPLTVHYQEKYYAAGKIPGGFFKREARPSEKETLTARLIDRPIRPLFVPGFKHEVLVMCTVLSHDLVNDPDIVAMIAASAALTISGVPFMGPIAAARVGFADGEYVLNPEVQDMDHLRLNPEQRLDLVVAGTRDAVMMVESEAYELTEAEMLGAVKFGHEAMQPVIDLIIDLAEAAAKEPFEFASPDYSALYARVKSLGEADMRAAYAIHDKGERRDAIEVAKAKVLAGLSEEELLDPNLGSALKKLESGILRGGIIDGRPRIDGRDNKTVRPIDCEVGFLPRTHGSSLFTRGETQALVVTTLGTGDDEQIIDALHGNSRSNFLLHYNFPPYSVGEVGRVGSPGRREIGHGKLAWRALQAVLPAPTDFPYTIRVVSEITESNGSSSMASVCGGSLSMMDAGVPLKAPVAGVAMGLILEEDGRWAVLTDILGDEDHLGDMDFKVAGTENGITSLQMDIKVAGITPEIMEQALAQAKDGRLHILGEMSKALSEGRREFSAHAPRIETMTIPTDKIREVIGSGGKVIREIVETSGAKVDISDDGTIKIASANADSIKKAYDMIYSIVAEPEEGKIYVGKVVKLVDFGAFVNFFGKRDGLVHVSQIAGKRLNHPNEVLKEGQEVKVKLLGFDDRGKVRLGMKMVDQETGEEIAPEKKEETAEG</sequence>
<evidence type="ECO:0000255" key="1">
    <source>
        <dbReference type="HAMAP-Rule" id="MF_01595"/>
    </source>
</evidence>
<evidence type="ECO:0000305" key="2"/>